<comment type="function">
    <text evidence="1 2">Plays an important role in the maintenance of the Golgi complex, in membrane trafficking, in exocytosis, through its interaction with myosin VI and Rab8. Links myosin VI to the Golgi complex and plays an important role in Golgi ribbon formation. Negatively regulates the induction of IFNB in response to RNA virus infection. Plays a neuroprotective role in the eye and optic nerve. Probably part of the TNF-alpha signaling pathway that can shift the equilibrium toward induction of cell death. May act by regulating membrane trafficking and cellular morphogenesis via a complex that contains Rab8 and huntingtin (HD). Mediates the interaction of Rab8 with the probable GTPase-activating protein TBC1D17 during Rab8-mediated endocytic trafficking, such as that of transferrin receptor (TFRC/TfR); regulates Rab8 recruitment to tubules emanating from the endocytic recycling compartment. Autophagy receptor that interacts directly with both the cargo to become degraded and an autophagy modifier of the MAP1 LC3 family; targets ubiquitin-coated bacteria (xenophagy) and appears to function in the same pathway as SQSTM1 and CALCOCO2/NDP52.</text>
</comment>
<comment type="subunit">
    <text evidence="2">Self-associates. Interacts with HD. Interacts with GTF3A. Interacts with MYO6. Interacts (via UBAN) with ubiquitinated TFRC. Interacts with GTP-bound Rab8 (RAB8A and/or RAB8B). Interacts with TBC1D17. Interacts with TBK1. Interacts with TRAF3. Binds to linear ubiquitin chains. Interacts with LC3 family members MAP1LC3A, MAP1LC3B, GABARAP, GABARAPL1 and GABARAPL2; OPTN phosphorylation increases the association (at least with MAP1LC3B). Interacts with RAB12; the interaction may be indirect. Interacts with TBK1; this interaction leads to the Golgi localization of TBK1 and its subsequent activation. Interacts with palmitoyltransferase ZDHHC17/HIP14; the interaction does not lead to palmitoylation of OPTN. Interacts with CYLD. Interacts with TOM1; the interaction is indirect and is mediated by MYO6, which acts as a bridge between TOM1 and OPTN. Interacts with USP12; the interaction is independent of USP12 deubiquitinase activity and may be involved in regulation of autophagic flux.</text>
</comment>
<comment type="subcellular location">
    <subcellularLocation>
        <location evidence="1">Cytoplasm</location>
        <location evidence="1">Perinuclear region</location>
    </subcellularLocation>
    <subcellularLocation>
        <location evidence="2">Golgi apparatus</location>
    </subcellularLocation>
    <subcellularLocation>
        <location evidence="1">Golgi apparatus</location>
        <location evidence="1">trans-Golgi network</location>
    </subcellularLocation>
    <subcellularLocation>
        <location evidence="1">Cytoplasmic vesicle</location>
        <location evidence="1">Autophagosome</location>
    </subcellularLocation>
    <subcellularLocation>
        <location evidence="1">Cytoplasmic vesicle</location>
    </subcellularLocation>
    <subcellularLocation>
        <location evidence="1">Recycling endosome</location>
    </subcellularLocation>
    <text evidence="1 2">Found in the perinuclear region and associates with the Golgi apparatus. Colocalizes with MYO6 and RAB8 at the Golgi complex and in vesicular structures close to the plasma membrane. Localizes to LC3-positive cytoplasmic vesicles upon induction of autophagy.</text>
</comment>
<comment type="tissue specificity">
    <text evidence="6">Present in aqueous humor of the eye (at protein level).</text>
</comment>
<comment type="domain">
    <text evidence="1">The LIR (LC3-interacting region) motif mediates the interaction with ATG8 family proteins.</text>
</comment>
<comment type="domain">
    <text evidence="1">Ubiquitin-binding motif (UBAN) is essential for its inhibitory function, subcellular localization and interaction with TBK1.</text>
</comment>
<comment type="PTM">
    <text evidence="1">Phosphorylated by TBK1, leading to restrict bacterial proliferation in case of infection.</text>
</comment>
<proteinExistence type="evidence at protein level"/>
<accession>Q861Q8</accession>
<keyword id="KW-0072">Autophagy</keyword>
<keyword id="KW-0175">Coiled coil</keyword>
<keyword id="KW-0963">Cytoplasm</keyword>
<keyword id="KW-0968">Cytoplasmic vesicle</keyword>
<keyword id="KW-0967">Endosome</keyword>
<keyword id="KW-0333">Golgi apparatus</keyword>
<keyword id="KW-0479">Metal-binding</keyword>
<keyword id="KW-0597">Phosphoprotein</keyword>
<keyword id="KW-1185">Reference proteome</keyword>
<keyword id="KW-0862">Zinc</keyword>
<keyword id="KW-0863">Zinc-finger</keyword>
<organism evidence="7">
    <name type="scientific">Macaca mulatta</name>
    <name type="common">Rhesus macaque</name>
    <dbReference type="NCBI Taxonomy" id="9544"/>
    <lineage>
        <taxon>Eukaryota</taxon>
        <taxon>Metazoa</taxon>
        <taxon>Chordata</taxon>
        <taxon>Craniata</taxon>
        <taxon>Vertebrata</taxon>
        <taxon>Euteleostomi</taxon>
        <taxon>Mammalia</taxon>
        <taxon>Eutheria</taxon>
        <taxon>Euarchontoglires</taxon>
        <taxon>Primates</taxon>
        <taxon>Haplorrhini</taxon>
        <taxon>Catarrhini</taxon>
        <taxon>Cercopithecidae</taxon>
        <taxon>Cercopithecinae</taxon>
        <taxon>Macaca</taxon>
    </lineage>
</organism>
<reference key="1">
    <citation type="submission" date="2004-09" db="EMBL/GenBank/DDBJ databases">
        <title>Genomic structure of optineurin (OPTN) in Rhesus monkey.</title>
        <authorList>
            <person name="Rezaie T."/>
            <person name="Sarfarazi M."/>
        </authorList>
    </citation>
    <scope>NUCLEOTIDE SEQUENCE [GENOMIC DNA / MRNA]</scope>
</reference>
<reference key="2">
    <citation type="journal article" date="2002" name="Science">
        <title>Adult-onset primary open-angle glaucoma caused by mutations in optineurin.</title>
        <authorList>
            <person name="Rezaie T."/>
            <person name="Child A."/>
            <person name="Hitchings R."/>
            <person name="Brice G."/>
            <person name="Miller L."/>
            <person name="Coca-Prados M."/>
            <person name="Heon E."/>
            <person name="Krupin T."/>
            <person name="Ritch R."/>
            <person name="Kreutzer D."/>
            <person name="Crick R.P."/>
            <person name="Sarfarazi M."/>
        </authorList>
    </citation>
    <scope>TISSUE SPECIFICITY</scope>
</reference>
<evidence type="ECO:0000250" key="1"/>
<evidence type="ECO:0000250" key="2">
    <source>
        <dbReference type="UniProtKB" id="Q96CV9"/>
    </source>
</evidence>
<evidence type="ECO:0000255" key="3"/>
<evidence type="ECO:0000255" key="4">
    <source>
        <dbReference type="PROSITE-ProRule" id="PRU01142"/>
    </source>
</evidence>
<evidence type="ECO:0000256" key="5">
    <source>
        <dbReference type="SAM" id="MobiDB-lite"/>
    </source>
</evidence>
<evidence type="ECO:0000269" key="6">
    <source>
    </source>
</evidence>
<evidence type="ECO:0000312" key="7">
    <source>
        <dbReference type="Proteomes" id="UP000006718"/>
    </source>
</evidence>
<sequence length="571" mass="65104">MSHQPLSCLTEKGDSPSESTGNGPPHLAHPNLDTFTPEELLQQMKELLTENHQLKEAMKLNNQAMKGRFEELSAWTEKQKEERQFFETQSKEAKERLMALSHENEKLKEELGKLKGKSERSSEDPTDDSRLPRAEAEQEKDQLRTQVTRLQAEKADLLGIVSELQLKLNSSGSSEDSFVEIRMAEGEAEGSVKEIKHSPGPTRTVSIGTSRSAEGAKNYLEHEELTVSQLLLCLREGNQKVERLEIALKEAKERVSDFEKKASNRSEIETQTEGSTEKENEEEKGPETVGSEVEALNLQVTSLFKELQEAHTKLSEAELMKKRLQEKCQALERKNSATPSELNEKQELVYTNKKLELQVESMLSEIKMEQAKTEDEKSKLAMLQLTHNKLLQEHNHALKTIEELTRKESEKVDRAVLKELSEKLELAEKALASKQLQMDEMKQTIAKQEEDLETMTVLRAQMEVYCSDFHAERAAREKIHEEKEQLALQLAVLLKENDAFEDGGRQSLMEMQSRHGARTSDPDQQAYLVQRGTEDRDWQQQRNIPIHSCPKCGEVLPDIDTLQIHVMDCII</sequence>
<name>OPTN_MACMU</name>
<dbReference type="EMBL" id="AY228374">
    <property type="protein sequence ID" value="AAO73054.1"/>
    <property type="molecule type" value="mRNA"/>
</dbReference>
<dbReference type="EMBL" id="AY228373">
    <property type="protein sequence ID" value="AAO73053.1"/>
    <property type="molecule type" value="mRNA"/>
</dbReference>
<dbReference type="EMBL" id="AY749122">
    <property type="protein sequence ID" value="AAV28653.1"/>
    <property type="molecule type" value="Genomic_DNA"/>
</dbReference>
<dbReference type="EMBL" id="AY749110">
    <property type="protein sequence ID" value="AAV28653.1"/>
    <property type="status" value="JOINED"/>
    <property type="molecule type" value="Genomic_DNA"/>
</dbReference>
<dbReference type="EMBL" id="AY749111">
    <property type="protein sequence ID" value="AAV28653.1"/>
    <property type="status" value="JOINED"/>
    <property type="molecule type" value="Genomic_DNA"/>
</dbReference>
<dbReference type="EMBL" id="AY749112">
    <property type="protein sequence ID" value="AAV28653.1"/>
    <property type="status" value="JOINED"/>
    <property type="molecule type" value="Genomic_DNA"/>
</dbReference>
<dbReference type="EMBL" id="AY749113">
    <property type="protein sequence ID" value="AAV28653.1"/>
    <property type="status" value="JOINED"/>
    <property type="molecule type" value="Genomic_DNA"/>
</dbReference>
<dbReference type="EMBL" id="AY749114">
    <property type="protein sequence ID" value="AAV28653.1"/>
    <property type="status" value="JOINED"/>
    <property type="molecule type" value="Genomic_DNA"/>
</dbReference>
<dbReference type="EMBL" id="AY749115">
    <property type="protein sequence ID" value="AAV28653.1"/>
    <property type="status" value="JOINED"/>
    <property type="molecule type" value="Genomic_DNA"/>
</dbReference>
<dbReference type="EMBL" id="AY749116">
    <property type="protein sequence ID" value="AAV28653.1"/>
    <property type="status" value="JOINED"/>
    <property type="molecule type" value="Genomic_DNA"/>
</dbReference>
<dbReference type="EMBL" id="AY749117">
    <property type="protein sequence ID" value="AAV28653.1"/>
    <property type="status" value="JOINED"/>
    <property type="molecule type" value="Genomic_DNA"/>
</dbReference>
<dbReference type="EMBL" id="AY749118">
    <property type="protein sequence ID" value="AAV28653.1"/>
    <property type="status" value="JOINED"/>
    <property type="molecule type" value="Genomic_DNA"/>
</dbReference>
<dbReference type="EMBL" id="AY749119">
    <property type="protein sequence ID" value="AAV28653.1"/>
    <property type="status" value="JOINED"/>
    <property type="molecule type" value="Genomic_DNA"/>
</dbReference>
<dbReference type="EMBL" id="AY749120">
    <property type="protein sequence ID" value="AAV28653.1"/>
    <property type="status" value="JOINED"/>
    <property type="molecule type" value="Genomic_DNA"/>
</dbReference>
<dbReference type="EMBL" id="AY749121">
    <property type="protein sequence ID" value="AAV28653.1"/>
    <property type="status" value="JOINED"/>
    <property type="molecule type" value="Genomic_DNA"/>
</dbReference>
<dbReference type="RefSeq" id="NP_001028069.1">
    <property type="nucleotide sequence ID" value="NM_001032897.1"/>
</dbReference>
<dbReference type="RefSeq" id="XP_015001948.1">
    <property type="nucleotide sequence ID" value="XM_015146462.2"/>
</dbReference>
<dbReference type="RefSeq" id="XP_015001949.1">
    <property type="nucleotide sequence ID" value="XM_015146463.2"/>
</dbReference>
<dbReference type="RefSeq" id="XP_015001950.1">
    <property type="nucleotide sequence ID" value="XM_015146464.1"/>
</dbReference>
<dbReference type="RefSeq" id="XP_015001951.1">
    <property type="nucleotide sequence ID" value="XM_015146465.2"/>
</dbReference>
<dbReference type="RefSeq" id="XP_028709052.1">
    <property type="nucleotide sequence ID" value="XM_028853219.1"/>
</dbReference>
<dbReference type="RefSeq" id="XP_028709054.1">
    <property type="nucleotide sequence ID" value="XM_028853221.1"/>
</dbReference>
<dbReference type="RefSeq" id="XP_028709055.1">
    <property type="nucleotide sequence ID" value="XM_028853222.1"/>
</dbReference>
<dbReference type="RefSeq" id="XP_028709056.1">
    <property type="nucleotide sequence ID" value="XM_028853223.1"/>
</dbReference>
<dbReference type="RefSeq" id="XP_028709057.1">
    <property type="nucleotide sequence ID" value="XM_028853224.1"/>
</dbReference>
<dbReference type="SMR" id="Q861Q8"/>
<dbReference type="FunCoup" id="Q861Q8">
    <property type="interactions" value="1455"/>
</dbReference>
<dbReference type="STRING" id="9544.ENSMMUP00000065325"/>
<dbReference type="PaxDb" id="9544-ENSMMUP00000036260"/>
<dbReference type="Ensembl" id="ENSMMUT00000007881.4">
    <property type="protein sequence ID" value="ENSMMUP00000007407.4"/>
    <property type="gene ID" value="ENSMMUG00000005601.4"/>
</dbReference>
<dbReference type="Ensembl" id="ENSMMUT00000043249.3">
    <property type="protein sequence ID" value="ENSMMUP00000036258.3"/>
    <property type="gene ID" value="ENSMMUG00000005601.4"/>
</dbReference>
<dbReference type="Ensembl" id="ENSMMUT00000043250.3">
    <property type="protein sequence ID" value="ENSMMUP00000036259.3"/>
    <property type="gene ID" value="ENSMMUG00000005601.4"/>
</dbReference>
<dbReference type="Ensembl" id="ENSMMUT00000092013.1">
    <property type="protein sequence ID" value="ENSMMUP00000079351.1"/>
    <property type="gene ID" value="ENSMMUG00000005601.4"/>
</dbReference>
<dbReference type="Ensembl" id="ENSMMUT00000102245.1">
    <property type="protein sequence ID" value="ENSMMUP00000067667.1"/>
    <property type="gene ID" value="ENSMMUG00000005601.4"/>
</dbReference>
<dbReference type="GeneID" id="574252"/>
<dbReference type="KEGG" id="mcc:574252"/>
<dbReference type="CTD" id="10133"/>
<dbReference type="VEuPathDB" id="HostDB:ENSMMUG00000005601"/>
<dbReference type="VGNC" id="VGNC:75415">
    <property type="gene designation" value="OPTN"/>
</dbReference>
<dbReference type="eggNOG" id="ENOG502QTG2">
    <property type="taxonomic scope" value="Eukaryota"/>
</dbReference>
<dbReference type="GeneTree" id="ENSGT00530000063808"/>
<dbReference type="HOGENOM" id="CLU_034097_1_0_1"/>
<dbReference type="InParanoid" id="Q861Q8"/>
<dbReference type="OMA" id="DMKQEMF"/>
<dbReference type="OrthoDB" id="6343844at2759"/>
<dbReference type="Proteomes" id="UP000006718">
    <property type="component" value="Chromosome 9"/>
</dbReference>
<dbReference type="Bgee" id="ENSMMUG00000005601">
    <property type="expression patterns" value="Expressed in hindlimb stylopod muscle and 22 other cell types or tissues"/>
</dbReference>
<dbReference type="ExpressionAtlas" id="Q861Q8">
    <property type="expression patterns" value="baseline and differential"/>
</dbReference>
<dbReference type="GO" id="GO:0005776">
    <property type="term" value="C:autophagosome"/>
    <property type="evidence" value="ECO:0007669"/>
    <property type="project" value="UniProtKB-SubCell"/>
</dbReference>
<dbReference type="GO" id="GO:0005737">
    <property type="term" value="C:cytoplasm"/>
    <property type="evidence" value="ECO:0000318"/>
    <property type="project" value="GO_Central"/>
</dbReference>
<dbReference type="GO" id="GO:0005794">
    <property type="term" value="C:Golgi apparatus"/>
    <property type="evidence" value="ECO:0000250"/>
    <property type="project" value="UniProtKB"/>
</dbReference>
<dbReference type="GO" id="GO:0005634">
    <property type="term" value="C:nucleus"/>
    <property type="evidence" value="ECO:0000318"/>
    <property type="project" value="GO_Central"/>
</dbReference>
<dbReference type="GO" id="GO:0048471">
    <property type="term" value="C:perinuclear region of cytoplasm"/>
    <property type="evidence" value="ECO:0007669"/>
    <property type="project" value="UniProtKB-SubCell"/>
</dbReference>
<dbReference type="GO" id="GO:0055037">
    <property type="term" value="C:recycling endosome"/>
    <property type="evidence" value="ECO:0007669"/>
    <property type="project" value="UniProtKB-SubCell"/>
</dbReference>
<dbReference type="GO" id="GO:0005802">
    <property type="term" value="C:trans-Golgi network"/>
    <property type="evidence" value="ECO:0000250"/>
    <property type="project" value="UniProtKB"/>
</dbReference>
<dbReference type="GO" id="GO:0070530">
    <property type="term" value="F:K63-linked polyubiquitin modification-dependent protein binding"/>
    <property type="evidence" value="ECO:0000318"/>
    <property type="project" value="GO_Central"/>
</dbReference>
<dbReference type="GO" id="GO:0008270">
    <property type="term" value="F:zinc ion binding"/>
    <property type="evidence" value="ECO:0007669"/>
    <property type="project" value="UniProtKB-KW"/>
</dbReference>
<dbReference type="GO" id="GO:0006914">
    <property type="term" value="P:autophagy"/>
    <property type="evidence" value="ECO:0007669"/>
    <property type="project" value="UniProtKB-KW"/>
</dbReference>
<dbReference type="GO" id="GO:0034620">
    <property type="term" value="P:cellular response to unfolded protein"/>
    <property type="evidence" value="ECO:0000250"/>
    <property type="project" value="UniProtKB"/>
</dbReference>
<dbReference type="GO" id="GO:0090161">
    <property type="term" value="P:Golgi ribbon formation"/>
    <property type="evidence" value="ECO:0000250"/>
    <property type="project" value="UniProtKB"/>
</dbReference>
<dbReference type="GO" id="GO:0034067">
    <property type="term" value="P:protein localization to Golgi apparatus"/>
    <property type="evidence" value="ECO:0000318"/>
    <property type="project" value="GO_Central"/>
</dbReference>
<dbReference type="GO" id="GO:0043122">
    <property type="term" value="P:regulation of canonical NF-kappaB signal transduction"/>
    <property type="evidence" value="ECO:0000318"/>
    <property type="project" value="GO_Central"/>
</dbReference>
<dbReference type="CDD" id="cd09803">
    <property type="entry name" value="UBAN"/>
    <property type="match status" value="1"/>
</dbReference>
<dbReference type="FunFam" id="1.20.5.390:FF:000004">
    <property type="entry name" value="Optineurin"/>
    <property type="match status" value="1"/>
</dbReference>
<dbReference type="FunFam" id="1.20.5.390:FF:000007">
    <property type="entry name" value="Optineurin"/>
    <property type="match status" value="1"/>
</dbReference>
<dbReference type="FunFam" id="1.20.5.990:FF:000002">
    <property type="entry name" value="Optineurin"/>
    <property type="match status" value="1"/>
</dbReference>
<dbReference type="Gene3D" id="1.20.5.390">
    <property type="entry name" value="L1 transposable element, trimerization domain"/>
    <property type="match status" value="2"/>
</dbReference>
<dbReference type="Gene3D" id="1.20.5.990">
    <property type="entry name" value="Nemo cc2-lz domain - 1d5 darpin complex"/>
    <property type="match status" value="1"/>
</dbReference>
<dbReference type="InterPro" id="IPR032419">
    <property type="entry name" value="CC2-LZ_dom"/>
</dbReference>
<dbReference type="InterPro" id="IPR021063">
    <property type="entry name" value="NEMO_N"/>
</dbReference>
<dbReference type="InterPro" id="IPR034735">
    <property type="entry name" value="NEMO_ZF"/>
</dbReference>
<dbReference type="InterPro" id="IPR051301">
    <property type="entry name" value="Optineurin/NFkB_EssMod"/>
</dbReference>
<dbReference type="PANTHER" id="PTHR31553">
    <property type="entry name" value="NF-KAPPA-B ESSENTIAL MODULATOR"/>
    <property type="match status" value="1"/>
</dbReference>
<dbReference type="PANTHER" id="PTHR31553:SF2">
    <property type="entry name" value="OPTINEURIN"/>
    <property type="match status" value="1"/>
</dbReference>
<dbReference type="Pfam" id="PF16516">
    <property type="entry name" value="CC2-LZ"/>
    <property type="match status" value="1"/>
</dbReference>
<dbReference type="Pfam" id="PF11577">
    <property type="entry name" value="NEMO"/>
    <property type="match status" value="1"/>
</dbReference>
<dbReference type="Pfam" id="PF18414">
    <property type="entry name" value="zf_C2H2_10"/>
    <property type="match status" value="1"/>
</dbReference>
<dbReference type="PROSITE" id="PS51801">
    <property type="entry name" value="ZF_CCHC_NOA"/>
    <property type="match status" value="1"/>
</dbReference>
<feature type="chain" id="PRO_0000058068" description="Optineurin">
    <location>
        <begin position="1"/>
        <end position="571"/>
    </location>
</feature>
<feature type="zinc finger region" description="CCHC NOA-type" evidence="4">
    <location>
        <begin position="541"/>
        <end position="571"/>
    </location>
</feature>
<feature type="region of interest" description="Disordered" evidence="5">
    <location>
        <begin position="1"/>
        <end position="32"/>
    </location>
</feature>
<feature type="region of interest" description="Interaction with Rab8" evidence="1">
    <location>
        <begin position="58"/>
        <end position="209"/>
    </location>
</feature>
<feature type="region of interest" description="Disordered" evidence="5">
    <location>
        <begin position="100"/>
        <end position="144"/>
    </location>
</feature>
<feature type="region of interest" description="Disordered" evidence="5">
    <location>
        <begin position="186"/>
        <end position="210"/>
    </location>
</feature>
<feature type="region of interest" description="Disordered" evidence="5">
    <location>
        <begin position="255"/>
        <end position="291"/>
    </location>
</feature>
<feature type="region of interest" description="Interaction with HD" evidence="1">
    <location>
        <begin position="405"/>
        <end position="571"/>
    </location>
</feature>
<feature type="region of interest" description="Interaction with MYO6" evidence="2">
    <location>
        <begin position="406"/>
        <end position="514"/>
    </location>
</feature>
<feature type="coiled-coil region" evidence="3">
    <location>
        <begin position="38"/>
        <end position="170"/>
    </location>
</feature>
<feature type="coiled-coil region" evidence="3">
    <location>
        <begin position="233"/>
        <end position="502"/>
    </location>
</feature>
<feature type="short sequence motif" description="LIR">
    <location>
        <begin position="176"/>
        <end position="181"/>
    </location>
</feature>
<feature type="short sequence motif" description="UBAN">
    <location>
        <begin position="468"/>
        <end position="473"/>
    </location>
</feature>
<feature type="compositionally biased region" description="Basic and acidic residues" evidence="5">
    <location>
        <begin position="100"/>
        <end position="143"/>
    </location>
</feature>
<feature type="compositionally biased region" description="Basic and acidic residues" evidence="5">
    <location>
        <begin position="186"/>
        <end position="197"/>
    </location>
</feature>
<feature type="compositionally biased region" description="Polar residues" evidence="5">
    <location>
        <begin position="201"/>
        <end position="210"/>
    </location>
</feature>
<feature type="compositionally biased region" description="Basic and acidic residues" evidence="5">
    <location>
        <begin position="255"/>
        <end position="268"/>
    </location>
</feature>
<feature type="compositionally biased region" description="Basic and acidic residues" evidence="5">
    <location>
        <begin position="275"/>
        <end position="286"/>
    </location>
</feature>
<feature type="binding site" evidence="4">
    <location>
        <position position="549"/>
    </location>
    <ligand>
        <name>Zn(2+)</name>
        <dbReference type="ChEBI" id="CHEBI:29105"/>
    </ligand>
</feature>
<feature type="binding site" evidence="4">
    <location>
        <position position="552"/>
    </location>
    <ligand>
        <name>Zn(2+)</name>
        <dbReference type="ChEBI" id="CHEBI:29105"/>
    </ligand>
</feature>
<feature type="binding site" evidence="4">
    <location>
        <position position="565"/>
    </location>
    <ligand>
        <name>Zn(2+)</name>
        <dbReference type="ChEBI" id="CHEBI:29105"/>
    </ligand>
</feature>
<feature type="binding site" evidence="4">
    <location>
        <position position="569"/>
    </location>
    <ligand>
        <name>Zn(2+)</name>
        <dbReference type="ChEBI" id="CHEBI:29105"/>
    </ligand>
</feature>
<feature type="modified residue" description="Phosphoserine; by TBK1" evidence="2">
    <location>
        <position position="177"/>
    </location>
</feature>
<feature type="modified residue" description="Phosphoserine" evidence="2">
    <location>
        <position position="198"/>
    </location>
</feature>
<feature type="modified residue" description="Phosphoserine" evidence="2">
    <location>
        <position position="336"/>
    </location>
</feature>
<feature type="modified residue" description="Phosphoserine" evidence="2">
    <location>
        <position position="520"/>
    </location>
</feature>
<protein>
    <recommendedName>
        <fullName>Optineurin</fullName>
    </recommendedName>
</protein>
<gene>
    <name type="primary">OPTN</name>
</gene>